<feature type="signal peptide" evidence="2">
    <location>
        <begin position="1"/>
        <end position="29"/>
    </location>
</feature>
<feature type="chain" id="PRO_0000025432" description="Receptor-type tyrosine-protein phosphatase F">
    <location>
        <begin position="30"/>
        <end position="1907"/>
    </location>
</feature>
<feature type="topological domain" description="Extracellular" evidence="2">
    <location>
        <begin position="30"/>
        <end position="1263"/>
    </location>
</feature>
<feature type="transmembrane region" description="Helical" evidence="2">
    <location>
        <begin position="1264"/>
        <end position="1284"/>
    </location>
</feature>
<feature type="topological domain" description="Cytoplasmic" evidence="2">
    <location>
        <begin position="1285"/>
        <end position="1907"/>
    </location>
</feature>
<feature type="domain" description="Ig-like C2-type 1">
    <location>
        <begin position="33"/>
        <end position="123"/>
    </location>
</feature>
<feature type="domain" description="Ig-like C2-type 2">
    <location>
        <begin position="135"/>
        <end position="224"/>
    </location>
</feature>
<feature type="domain" description="Ig-like C2-type 3">
    <location>
        <begin position="232"/>
        <end position="314"/>
    </location>
</feature>
<feature type="domain" description="Fibronectin type-III 1" evidence="5">
    <location>
        <begin position="321"/>
        <end position="411"/>
    </location>
</feature>
<feature type="domain" description="Fibronectin type-III 2" evidence="5">
    <location>
        <begin position="416"/>
        <end position="510"/>
    </location>
</feature>
<feature type="domain" description="Fibronectin type-III 3" evidence="5">
    <location>
        <begin position="514"/>
        <end position="604"/>
    </location>
</feature>
<feature type="domain" description="Fibronectin type-III 4" evidence="5">
    <location>
        <begin position="609"/>
        <end position="706"/>
    </location>
</feature>
<feature type="domain" description="Fibronectin type-III 5" evidence="5">
    <location>
        <begin position="711"/>
        <end position="819"/>
    </location>
</feature>
<feature type="domain" description="Fibronectin type-III 6" evidence="5">
    <location>
        <begin position="820"/>
        <end position="914"/>
    </location>
</feature>
<feature type="domain" description="Fibronectin type-III 7" evidence="5">
    <location>
        <begin position="918"/>
        <end position="1010"/>
    </location>
</feature>
<feature type="domain" description="Fibronectin type-III 8" evidence="5">
    <location>
        <begin position="1014"/>
        <end position="1098"/>
    </location>
</feature>
<feature type="domain" description="Tyrosine-protein phosphatase 1" evidence="4">
    <location>
        <begin position="1352"/>
        <end position="1607"/>
    </location>
</feature>
<feature type="domain" description="Tyrosine-protein phosphatase 2" evidence="4">
    <location>
        <begin position="1639"/>
        <end position="1898"/>
    </location>
</feature>
<feature type="region of interest" description="Disordered" evidence="7">
    <location>
        <begin position="398"/>
        <end position="417"/>
    </location>
</feature>
<feature type="region of interest" description="Disordered" evidence="7">
    <location>
        <begin position="693"/>
        <end position="712"/>
    </location>
</feature>
<feature type="active site" description="Phosphocysteine intermediate" evidence="16">
    <location>
        <position position="1548"/>
    </location>
</feature>
<feature type="active site" description="Phosphocysteine intermediate" evidence="1">
    <location>
        <position position="1839"/>
    </location>
</feature>
<feature type="binding site" evidence="1">
    <location>
        <begin position="68"/>
        <end position="77"/>
    </location>
    <ligand>
        <name>heparin</name>
        <dbReference type="ChEBI" id="CHEBI:28304"/>
    </ligand>
</feature>
<feature type="binding site" evidence="1">
    <location>
        <position position="1516"/>
    </location>
    <ligand>
        <name>substrate</name>
    </ligand>
</feature>
<feature type="binding site" evidence="1">
    <location>
        <begin position="1548"/>
        <end position="1554"/>
    </location>
    <ligand>
        <name>substrate</name>
    </ligand>
</feature>
<feature type="binding site" evidence="1">
    <location>
        <position position="1592"/>
    </location>
    <ligand>
        <name>substrate</name>
    </ligand>
</feature>
<feature type="modified residue" description="Phosphoserine" evidence="17">
    <location>
        <position position="1305"/>
    </location>
</feature>
<feature type="glycosylation site" description="N-linked (GlcNAc...) asparagine" evidence="2">
    <location>
        <position position="117"/>
    </location>
</feature>
<feature type="glycosylation site" description="N-linked (GlcNAc...) asparagine" evidence="2">
    <location>
        <position position="250"/>
    </location>
</feature>
<feature type="glycosylation site" description="N-linked (GlcNAc...) asparagine" evidence="2">
    <location>
        <position position="295"/>
    </location>
</feature>
<feature type="glycosylation site" description="N-linked (GlcNAc...) asparagine" evidence="2">
    <location>
        <position position="721"/>
    </location>
</feature>
<feature type="glycosylation site" description="N-linked (GlcNAc...) asparagine" evidence="9 10">
    <location>
        <position position="966"/>
    </location>
</feature>
<feature type="disulfide bond" evidence="3">
    <location>
        <begin position="54"/>
        <end position="107"/>
    </location>
</feature>
<feature type="disulfide bond" evidence="3">
    <location>
        <begin position="156"/>
        <end position="207"/>
    </location>
</feature>
<feature type="disulfide bond" evidence="3">
    <location>
        <begin position="253"/>
        <end position="298"/>
    </location>
</feature>
<feature type="splice variant" id="VSP_036617" description="In isoform 2." evidence="14 15">
    <location>
        <begin position="772"/>
        <end position="780"/>
    </location>
</feature>
<feature type="sequence variant" id="VAR_054766" description="In dbSNP:rs1065775.">
    <original>A</original>
    <variation>V</variation>
    <location>
        <position position="412"/>
    </location>
</feature>
<feature type="sequence variant" id="VAR_020299" description="In dbSNP:rs3748796.">
    <original>Y</original>
    <variation>C</variation>
    <location>
        <position position="450"/>
    </location>
</feature>
<feature type="sequence variant" id="VAR_020300" description="In dbSNP:rs3748800.">
    <original>D</original>
    <variation>N</variation>
    <location>
        <position position="562"/>
    </location>
</feature>
<feature type="mutagenesis site" description="Loss of activity." evidence="8">
    <original>C</original>
    <variation>S</variation>
    <location>
        <position position="1548"/>
    </location>
</feature>
<feature type="sequence conflict" description="In Ref. 1; CAA68754." evidence="16" ref="1">
    <original>Y</original>
    <variation>H</variation>
    <location>
        <position position="646"/>
    </location>
</feature>
<feature type="sequence conflict" description="In Ref. 5; AAH48768." evidence="16" ref="5">
    <original>I</original>
    <variation>T</variation>
    <location>
        <position position="1421"/>
    </location>
</feature>
<feature type="strand" evidence="21">
    <location>
        <begin position="31"/>
        <end position="37"/>
    </location>
</feature>
<feature type="strand" evidence="21">
    <location>
        <begin position="42"/>
        <end position="45"/>
    </location>
</feature>
<feature type="strand" evidence="21">
    <location>
        <begin position="50"/>
        <end position="60"/>
    </location>
</feature>
<feature type="strand" evidence="21">
    <location>
        <begin position="63"/>
        <end position="68"/>
    </location>
</feature>
<feature type="turn" evidence="21">
    <location>
        <begin position="75"/>
        <end position="77"/>
    </location>
</feature>
<feature type="strand" evidence="21">
    <location>
        <begin position="78"/>
        <end position="83"/>
    </location>
</feature>
<feature type="helix" evidence="21">
    <location>
        <begin position="84"/>
        <end position="86"/>
    </location>
</feature>
<feature type="strand" evidence="21">
    <location>
        <begin position="88"/>
        <end position="93"/>
    </location>
</feature>
<feature type="helix" evidence="21">
    <location>
        <begin position="98"/>
        <end position="101"/>
    </location>
</feature>
<feature type="strand" evidence="21">
    <location>
        <begin position="103"/>
        <end position="111"/>
    </location>
</feature>
<feature type="strand" evidence="21">
    <location>
        <begin position="114"/>
        <end position="125"/>
    </location>
</feature>
<feature type="helix" evidence="21">
    <location>
        <begin position="127"/>
        <end position="129"/>
    </location>
</feature>
<feature type="strand" evidence="21">
    <location>
        <begin position="136"/>
        <end position="139"/>
    </location>
</feature>
<feature type="strand" evidence="21">
    <location>
        <begin position="144"/>
        <end position="147"/>
    </location>
</feature>
<feature type="strand" evidence="21">
    <location>
        <begin position="152"/>
        <end position="154"/>
    </location>
</feature>
<feature type="strand" evidence="21">
    <location>
        <begin position="157"/>
        <end position="159"/>
    </location>
</feature>
<feature type="strand" evidence="21">
    <location>
        <begin position="165"/>
        <end position="170"/>
    </location>
</feature>
<feature type="helix" evidence="21">
    <location>
        <begin position="177"/>
        <end position="179"/>
    </location>
</feature>
<feature type="strand" evidence="21">
    <location>
        <begin position="183"/>
        <end position="186"/>
    </location>
</feature>
<feature type="strand" evidence="21">
    <location>
        <begin position="192"/>
        <end position="194"/>
    </location>
</feature>
<feature type="helix" evidence="21">
    <location>
        <begin position="199"/>
        <end position="201"/>
    </location>
</feature>
<feature type="strand" evidence="21">
    <location>
        <begin position="203"/>
        <end position="211"/>
    </location>
</feature>
<feature type="strand" evidence="21">
    <location>
        <begin position="214"/>
        <end position="217"/>
    </location>
</feature>
<feature type="strand" evidence="21">
    <location>
        <begin position="221"/>
        <end position="226"/>
    </location>
</feature>
<feature type="strand" evidence="25">
    <location>
        <begin position="323"/>
        <end position="330"/>
    </location>
</feature>
<feature type="strand" evidence="25">
    <location>
        <begin position="335"/>
        <end position="340"/>
    </location>
</feature>
<feature type="strand" evidence="25">
    <location>
        <begin position="349"/>
        <end position="356"/>
    </location>
</feature>
<feature type="strand" evidence="25">
    <location>
        <begin position="364"/>
        <end position="369"/>
    </location>
</feature>
<feature type="strand" evidence="25">
    <location>
        <begin position="371"/>
        <end position="376"/>
    </location>
</feature>
<feature type="strand" evidence="25">
    <location>
        <begin position="384"/>
        <end position="392"/>
    </location>
</feature>
<feature type="strand" evidence="26">
    <location>
        <begin position="397"/>
        <end position="400"/>
    </location>
</feature>
<feature type="strand" evidence="25">
    <location>
        <begin position="404"/>
        <end position="407"/>
    </location>
</feature>
<feature type="strand" evidence="25">
    <location>
        <begin position="418"/>
        <end position="428"/>
    </location>
</feature>
<feature type="strand" evidence="25">
    <location>
        <begin position="430"/>
        <end position="435"/>
    </location>
</feature>
<feature type="strand" evidence="25">
    <location>
        <begin position="444"/>
        <end position="453"/>
    </location>
</feature>
<feature type="helix" evidence="25">
    <location>
        <begin position="459"/>
        <end position="461"/>
    </location>
</feature>
<feature type="strand" evidence="25">
    <location>
        <begin position="462"/>
        <end position="467"/>
    </location>
</feature>
<feature type="strand" evidence="25">
    <location>
        <begin position="469"/>
        <end position="475"/>
    </location>
</feature>
<feature type="strand" evidence="25">
    <location>
        <begin position="483"/>
        <end position="494"/>
    </location>
</feature>
<feature type="strand" evidence="25">
    <location>
        <begin position="503"/>
        <end position="506"/>
    </location>
</feature>
<feature type="strand" evidence="24">
    <location>
        <begin position="519"/>
        <end position="522"/>
    </location>
</feature>
<feature type="strand" evidence="24">
    <location>
        <begin position="524"/>
        <end position="526"/>
    </location>
</feature>
<feature type="strand" evidence="24">
    <location>
        <begin position="528"/>
        <end position="531"/>
    </location>
</feature>
<feature type="strand" evidence="24">
    <location>
        <begin position="540"/>
        <end position="549"/>
    </location>
</feature>
<feature type="helix" evidence="24">
    <location>
        <begin position="550"/>
        <end position="552"/>
    </location>
</feature>
<feature type="strand" evidence="24">
    <location>
        <begin position="556"/>
        <end position="561"/>
    </location>
</feature>
<feature type="strand" evidence="24">
    <location>
        <begin position="565"/>
        <end position="569"/>
    </location>
</feature>
<feature type="strand" evidence="24">
    <location>
        <begin position="577"/>
        <end position="586"/>
    </location>
</feature>
<feature type="strand" evidence="24">
    <location>
        <begin position="597"/>
        <end position="600"/>
    </location>
</feature>
<feature type="strand" evidence="22">
    <location>
        <begin position="611"/>
        <end position="619"/>
    </location>
</feature>
<feature type="strand" evidence="22">
    <location>
        <begin position="622"/>
        <end position="628"/>
    </location>
</feature>
<feature type="helix" evidence="22">
    <location>
        <begin position="632"/>
        <end position="634"/>
    </location>
</feature>
<feature type="strand" evidence="22">
    <location>
        <begin position="639"/>
        <end position="652"/>
    </location>
</feature>
<feature type="strand" evidence="22">
    <location>
        <begin position="657"/>
        <end position="663"/>
    </location>
</feature>
<feature type="strand" evidence="22">
    <location>
        <begin position="667"/>
        <end position="671"/>
    </location>
</feature>
<feature type="strand" evidence="22">
    <location>
        <begin position="679"/>
        <end position="690"/>
    </location>
</feature>
<feature type="strand" evidence="22">
    <location>
        <begin position="692"/>
        <end position="695"/>
    </location>
</feature>
<feature type="strand" evidence="22">
    <location>
        <begin position="699"/>
        <end position="702"/>
    </location>
</feature>
<feature type="strand" evidence="19">
    <location>
        <begin position="825"/>
        <end position="830"/>
    </location>
</feature>
<feature type="strand" evidence="19">
    <location>
        <begin position="835"/>
        <end position="841"/>
    </location>
</feature>
<feature type="strand" evidence="19">
    <location>
        <begin position="852"/>
        <end position="859"/>
    </location>
</feature>
<feature type="strand" evidence="19">
    <location>
        <begin position="866"/>
        <end position="871"/>
    </location>
</feature>
<feature type="strand" evidence="19">
    <location>
        <begin position="876"/>
        <end position="880"/>
    </location>
</feature>
<feature type="strand" evidence="19">
    <location>
        <begin position="887"/>
        <end position="896"/>
    </location>
</feature>
<feature type="strand" evidence="19">
    <location>
        <begin position="899"/>
        <end position="909"/>
    </location>
</feature>
<feature type="strand" evidence="20">
    <location>
        <begin position="920"/>
        <end position="923"/>
    </location>
</feature>
<feature type="strand" evidence="20">
    <location>
        <begin position="925"/>
        <end position="927"/>
    </location>
</feature>
<feature type="strand" evidence="20">
    <location>
        <begin position="935"/>
        <end position="937"/>
    </location>
</feature>
<feature type="strand" evidence="20">
    <location>
        <begin position="950"/>
        <end position="957"/>
    </location>
</feature>
<feature type="strand" evidence="20">
    <location>
        <begin position="963"/>
        <end position="971"/>
    </location>
</feature>
<feature type="strand" evidence="20">
    <location>
        <begin position="984"/>
        <end position="987"/>
    </location>
</feature>
<feature type="helix" evidence="18">
    <location>
        <begin position="1334"/>
        <end position="1344"/>
    </location>
</feature>
<feature type="turn" evidence="18">
    <location>
        <begin position="1347"/>
        <end position="1349"/>
    </location>
</feature>
<feature type="helix" evidence="18">
    <location>
        <begin position="1350"/>
        <end position="1358"/>
    </location>
</feature>
<feature type="helix" evidence="18">
    <location>
        <begin position="1368"/>
        <end position="1371"/>
    </location>
</feature>
<feature type="turn" evidence="18">
    <location>
        <begin position="1373"/>
        <end position="1375"/>
    </location>
</feature>
<feature type="helix" evidence="18">
    <location>
        <begin position="1376"/>
        <end position="1378"/>
    </location>
</feature>
<feature type="turn" evidence="18">
    <location>
        <begin position="1388"/>
        <end position="1390"/>
    </location>
</feature>
<feature type="turn" evidence="18">
    <location>
        <begin position="1401"/>
        <end position="1404"/>
    </location>
</feature>
<feature type="strand" evidence="18">
    <location>
        <begin position="1407"/>
        <end position="1413"/>
    </location>
</feature>
<feature type="strand" evidence="18">
    <location>
        <begin position="1416"/>
        <end position="1423"/>
    </location>
</feature>
<feature type="turn" evidence="18">
    <location>
        <begin position="1428"/>
        <end position="1430"/>
    </location>
</feature>
<feature type="helix" evidence="18">
    <location>
        <begin position="1431"/>
        <end position="1440"/>
    </location>
</feature>
<feature type="strand" evidence="18">
    <location>
        <begin position="1445"/>
        <end position="1448"/>
    </location>
</feature>
<feature type="strand" evidence="18">
    <location>
        <begin position="1452"/>
        <end position="1454"/>
    </location>
</feature>
<feature type="strand" evidence="18">
    <location>
        <begin position="1466"/>
        <end position="1472"/>
    </location>
</feature>
<feature type="strand" evidence="18">
    <location>
        <begin position="1475"/>
        <end position="1484"/>
    </location>
</feature>
<feature type="strand" evidence="18">
    <location>
        <begin position="1486"/>
        <end position="1497"/>
    </location>
</feature>
<feature type="strand" evidence="18">
    <location>
        <begin position="1503"/>
        <end position="1511"/>
    </location>
</feature>
<feature type="strand" evidence="18">
    <location>
        <begin position="1516"/>
        <end position="1518"/>
    </location>
</feature>
<feature type="helix" evidence="18">
    <location>
        <begin position="1524"/>
        <end position="1536"/>
    </location>
</feature>
<feature type="strand" evidence="18">
    <location>
        <begin position="1544"/>
        <end position="1553"/>
    </location>
</feature>
<feature type="helix" evidence="18">
    <location>
        <begin position="1554"/>
        <end position="1571"/>
    </location>
</feature>
<feature type="strand" evidence="23">
    <location>
        <begin position="1572"/>
        <end position="1574"/>
    </location>
</feature>
<feature type="helix" evidence="18">
    <location>
        <begin position="1576"/>
        <end position="1584"/>
    </location>
</feature>
<feature type="helix" evidence="18">
    <location>
        <begin position="1594"/>
        <end position="1610"/>
    </location>
</feature>
<feature type="helix" evidence="18">
    <location>
        <begin position="1617"/>
        <end position="1619"/>
    </location>
</feature>
<feature type="helix" evidence="18">
    <location>
        <begin position="1620"/>
        <end position="1627"/>
    </location>
</feature>
<feature type="helix" evidence="18">
    <location>
        <begin position="1638"/>
        <end position="1644"/>
    </location>
</feature>
<feature type="turn" evidence="18">
    <location>
        <begin position="1645"/>
        <end position="1647"/>
    </location>
</feature>
<feature type="turn" evidence="18">
    <location>
        <begin position="1657"/>
        <end position="1660"/>
    </location>
</feature>
<feature type="helix" evidence="18">
    <location>
        <begin position="1662"/>
        <end position="1667"/>
    </location>
</feature>
<feature type="turn" evidence="18">
    <location>
        <begin position="1677"/>
        <end position="1679"/>
    </location>
</feature>
<feature type="turn" evidence="18">
    <location>
        <begin position="1690"/>
        <end position="1693"/>
    </location>
</feature>
<feature type="strand" evidence="18">
    <location>
        <begin position="1696"/>
        <end position="1700"/>
    </location>
</feature>
<feature type="strand" evidence="18">
    <location>
        <begin position="1703"/>
        <end position="1705"/>
    </location>
</feature>
<feature type="strand" evidence="18">
    <location>
        <begin position="1709"/>
        <end position="1712"/>
    </location>
</feature>
<feature type="helix" evidence="18">
    <location>
        <begin position="1717"/>
        <end position="1719"/>
    </location>
</feature>
<feature type="helix" evidence="18">
    <location>
        <begin position="1720"/>
        <end position="1729"/>
    </location>
</feature>
<feature type="strand" evidence="18">
    <location>
        <begin position="1734"/>
        <end position="1737"/>
    </location>
</feature>
<feature type="strand" evidence="18">
    <location>
        <begin position="1741"/>
        <end position="1743"/>
    </location>
</feature>
<feature type="strand" evidence="18">
    <location>
        <begin position="1746"/>
        <end position="1749"/>
    </location>
</feature>
<feature type="strand" evidence="18">
    <location>
        <begin position="1755"/>
        <end position="1757"/>
    </location>
</feature>
<feature type="strand" evidence="18">
    <location>
        <begin position="1759"/>
        <end position="1761"/>
    </location>
</feature>
<feature type="strand" evidence="18">
    <location>
        <begin position="1764"/>
        <end position="1773"/>
    </location>
</feature>
<feature type="strand" evidence="18">
    <location>
        <begin position="1775"/>
        <end position="1786"/>
    </location>
</feature>
<feature type="turn" evidence="18">
    <location>
        <begin position="1787"/>
        <end position="1789"/>
    </location>
</feature>
<feature type="strand" evidence="18">
    <location>
        <begin position="1792"/>
        <end position="1800"/>
    </location>
</feature>
<feature type="strand" evidence="18">
    <location>
        <begin position="1805"/>
        <end position="1807"/>
    </location>
</feature>
<feature type="helix" evidence="18">
    <location>
        <begin position="1813"/>
        <end position="1828"/>
    </location>
</feature>
<feature type="strand" evidence="18">
    <location>
        <begin position="1835"/>
        <end position="1844"/>
    </location>
</feature>
<feature type="helix" evidence="18">
    <location>
        <begin position="1845"/>
        <end position="1862"/>
    </location>
</feature>
<feature type="strand" evidence="18">
    <location>
        <begin position="1863"/>
        <end position="1865"/>
    </location>
</feature>
<feature type="helix" evidence="18">
    <location>
        <begin position="1867"/>
        <end position="1874"/>
    </location>
</feature>
<feature type="turn" evidence="18">
    <location>
        <begin position="1875"/>
        <end position="1877"/>
    </location>
</feature>
<feature type="helix" evidence="18">
    <location>
        <begin position="1885"/>
        <end position="1900"/>
    </location>
</feature>
<accession>P10586</accession>
<accession>D3DPX6</accession>
<accession>D3DPX7</accession>
<accession>Q5T021</accession>
<accession>Q5T022</accession>
<accession>Q5W9G2</accession>
<accession>Q86WS0</accession>
<comment type="function">
    <text>Possible cell adhesion receptor. It possesses an intrinsic protein tyrosine phosphatase activity (PTPase) and dephosphorylates EPHA2 regulating its activity.</text>
</comment>
<comment type="function">
    <text>The first PTPase domain has enzymatic activity, while the second one seems to affect the substrate specificity of the first one.</text>
</comment>
<comment type="catalytic activity">
    <reaction evidence="6">
        <text>O-phospho-L-tyrosyl-[protein] + H2O = L-tyrosyl-[protein] + phosphate</text>
        <dbReference type="Rhea" id="RHEA:10684"/>
        <dbReference type="Rhea" id="RHEA-COMP:10136"/>
        <dbReference type="Rhea" id="RHEA-COMP:20101"/>
        <dbReference type="ChEBI" id="CHEBI:15377"/>
        <dbReference type="ChEBI" id="CHEBI:43474"/>
        <dbReference type="ChEBI" id="CHEBI:46858"/>
        <dbReference type="ChEBI" id="CHEBI:61978"/>
        <dbReference type="EC" id="3.1.3.48"/>
    </reaction>
</comment>
<comment type="subunit">
    <text evidence="1 12 13">Interacts with GRIP1 (By similarity). Interacts with PPFIA1, PPFIA2 and PPFIA3. Interacts with INSR.</text>
</comment>
<comment type="subcellular location">
    <subcellularLocation>
        <location>Membrane</location>
        <topology>Single-pass type I membrane protein</topology>
    </subcellularLocation>
</comment>
<comment type="alternative products">
    <event type="alternative splicing"/>
    <isoform>
        <id>P10586-1</id>
        <name>1</name>
        <sequence type="displayed"/>
    </isoform>
    <isoform>
        <id>P10586-2</id>
        <name>2</name>
        <sequence type="described" ref="VSP_036617"/>
    </isoform>
</comment>
<comment type="disease" evidence="11">
    <disease id="DI-04216">
        <name>Aplasia or hypoplasia of the breasts and/or nipples 2</name>
        <acronym>BNAH2</acronym>
        <description>A group of congenital deformities encompassing total absence of breasts and nipple (amastia), absence of the nipple (athelia), and absence of the mammary gland (amazia).</description>
        <dbReference type="MIM" id="616001"/>
    </disease>
    <text>The disease is caused by variants affecting the gene represented in this entry.</text>
</comment>
<comment type="similarity">
    <text evidence="16">Belongs to the protein-tyrosine phosphatase family. Receptor class 2A subfamily.</text>
</comment>
<comment type="sequence caution" evidence="16">
    <conflict type="erroneous initiation">
        <sequence resource="EMBL-CDS" id="BAD66835"/>
    </conflict>
</comment>
<comment type="sequence caution" evidence="16">
    <conflict type="erroneous initiation">
        <sequence resource="EMBL-CDS" id="CAA68754"/>
    </conflict>
</comment>
<gene>
    <name type="primary">PTPRF</name>
    <name type="synonym">LAR</name>
</gene>
<organism>
    <name type="scientific">Homo sapiens</name>
    <name type="common">Human</name>
    <dbReference type="NCBI Taxonomy" id="9606"/>
    <lineage>
        <taxon>Eukaryota</taxon>
        <taxon>Metazoa</taxon>
        <taxon>Chordata</taxon>
        <taxon>Craniata</taxon>
        <taxon>Vertebrata</taxon>
        <taxon>Euteleostomi</taxon>
        <taxon>Mammalia</taxon>
        <taxon>Eutheria</taxon>
        <taxon>Euarchontoglires</taxon>
        <taxon>Primates</taxon>
        <taxon>Haplorrhini</taxon>
        <taxon>Catarrhini</taxon>
        <taxon>Hominidae</taxon>
        <taxon>Homo</taxon>
    </lineage>
</organism>
<dbReference type="EC" id="3.1.3.48"/>
<dbReference type="EMBL" id="Y00815">
    <property type="protein sequence ID" value="CAA68754.1"/>
    <property type="status" value="ALT_INIT"/>
    <property type="molecule type" value="mRNA"/>
</dbReference>
<dbReference type="EMBL" id="AB177857">
    <property type="protein sequence ID" value="BAD66835.1"/>
    <property type="status" value="ALT_INIT"/>
    <property type="molecule type" value="mRNA"/>
</dbReference>
<dbReference type="EMBL" id="AC092815">
    <property type="status" value="NOT_ANNOTATED_CDS"/>
    <property type="molecule type" value="Genomic_DNA"/>
</dbReference>
<dbReference type="EMBL" id="AL583862">
    <property type="status" value="NOT_ANNOTATED_CDS"/>
    <property type="molecule type" value="Genomic_DNA"/>
</dbReference>
<dbReference type="EMBL" id="CH471059">
    <property type="protein sequence ID" value="EAX07086.1"/>
    <property type="molecule type" value="Genomic_DNA"/>
</dbReference>
<dbReference type="EMBL" id="CH471059">
    <property type="protein sequence ID" value="EAX07087.1"/>
    <property type="molecule type" value="Genomic_DNA"/>
</dbReference>
<dbReference type="EMBL" id="CH471059">
    <property type="protein sequence ID" value="EAX07088.1"/>
    <property type="molecule type" value="Genomic_DNA"/>
</dbReference>
<dbReference type="EMBL" id="CH471059">
    <property type="protein sequence ID" value="EAX07089.1"/>
    <property type="molecule type" value="Genomic_DNA"/>
</dbReference>
<dbReference type="EMBL" id="BC048768">
    <property type="protein sequence ID" value="AAH48768.1"/>
    <property type="molecule type" value="mRNA"/>
</dbReference>
<dbReference type="CCDS" id="CCDS489.2">
    <molecule id="P10586-1"/>
</dbReference>
<dbReference type="CCDS" id="CCDS490.2">
    <molecule id="P10586-2"/>
</dbReference>
<dbReference type="PIR" id="S03841">
    <property type="entry name" value="TDHULK"/>
</dbReference>
<dbReference type="RefSeq" id="NP_002831.2">
    <molecule id="P10586-1"/>
    <property type="nucleotide sequence ID" value="NM_002840.5"/>
</dbReference>
<dbReference type="RefSeq" id="NP_569707.2">
    <molecule id="P10586-2"/>
    <property type="nucleotide sequence ID" value="NM_130440.4"/>
</dbReference>
<dbReference type="PDB" id="1LAR">
    <property type="method" value="X-ray"/>
    <property type="resolution" value="2.00 A"/>
    <property type="chains" value="A/B=1333-1907"/>
</dbReference>
<dbReference type="PDB" id="2DJU">
    <property type="method" value="NMR"/>
    <property type="chains" value="A=319-411"/>
</dbReference>
<dbReference type="PDB" id="2DN7">
    <property type="method" value="NMR"/>
    <property type="chains" value="A=821-914"/>
</dbReference>
<dbReference type="PDB" id="2EDX">
    <property type="method" value="NMR"/>
    <property type="chains" value="A=596-716"/>
</dbReference>
<dbReference type="PDB" id="2EDY">
    <property type="method" value="NMR"/>
    <property type="chains" value="A=915-1010"/>
</dbReference>
<dbReference type="PDB" id="2YD5">
    <property type="method" value="X-ray"/>
    <property type="resolution" value="2.20 A"/>
    <property type="chains" value="A=29-231"/>
</dbReference>
<dbReference type="PDB" id="2YD8">
    <property type="method" value="X-ray"/>
    <property type="resolution" value="2.05 A"/>
    <property type="chains" value="A=29-231"/>
</dbReference>
<dbReference type="PDB" id="4N5U">
    <property type="method" value="X-ray"/>
    <property type="resolution" value="1.46 A"/>
    <property type="chains" value="A=601-705"/>
</dbReference>
<dbReference type="PDB" id="6KR4">
    <property type="method" value="X-ray"/>
    <property type="resolution" value="2.85 A"/>
    <property type="chains" value="A/B/C/D=1332-1907"/>
</dbReference>
<dbReference type="PDB" id="6TPT">
    <property type="method" value="X-ray"/>
    <property type="resolution" value="3.20 A"/>
    <property type="chains" value="A=512-706"/>
</dbReference>
<dbReference type="PDB" id="6TPU">
    <property type="method" value="X-ray"/>
    <property type="resolution" value="1.55 A"/>
    <property type="chains" value="A/B=513-706"/>
</dbReference>
<dbReference type="PDB" id="6TPV">
    <property type="method" value="X-ray"/>
    <property type="resolution" value="1.80 A"/>
    <property type="chains" value="A/B=319-512"/>
</dbReference>
<dbReference type="PDB" id="6TPW">
    <property type="method" value="X-ray"/>
    <property type="resolution" value="2.90 A"/>
    <property type="chains" value="A=319-706"/>
</dbReference>
<dbReference type="PDBsum" id="1LAR"/>
<dbReference type="PDBsum" id="2DJU"/>
<dbReference type="PDBsum" id="2DN7"/>
<dbReference type="PDBsum" id="2EDX"/>
<dbReference type="PDBsum" id="2EDY"/>
<dbReference type="PDBsum" id="2YD5"/>
<dbReference type="PDBsum" id="2YD8"/>
<dbReference type="PDBsum" id="4N5U"/>
<dbReference type="PDBsum" id="6KR4"/>
<dbReference type="PDBsum" id="6TPT"/>
<dbReference type="PDBsum" id="6TPU"/>
<dbReference type="PDBsum" id="6TPV"/>
<dbReference type="PDBsum" id="6TPW"/>
<dbReference type="SMR" id="P10586"/>
<dbReference type="BioGRID" id="111756">
    <property type="interactions" value="267"/>
</dbReference>
<dbReference type="FunCoup" id="P10586">
    <property type="interactions" value="1347"/>
</dbReference>
<dbReference type="IntAct" id="P10586">
    <property type="interactions" value="106"/>
</dbReference>
<dbReference type="MINT" id="P10586"/>
<dbReference type="STRING" id="9606.ENSP00000353030"/>
<dbReference type="BindingDB" id="P10586"/>
<dbReference type="ChEMBL" id="CHEMBL3521"/>
<dbReference type="GuidetoPHARMACOLOGY" id="1855"/>
<dbReference type="DEPOD" id="PTPRF"/>
<dbReference type="GlyConnect" id="1708">
    <property type="glycosylation" value="21 N-Linked glycans (4 sites)"/>
</dbReference>
<dbReference type="GlyCosmos" id="P10586">
    <property type="glycosylation" value="7 sites, 21 glycans"/>
</dbReference>
<dbReference type="GlyGen" id="P10586">
    <property type="glycosylation" value="10 sites, 42 N-linked glycans (5 sites), 1 O-linked glycan (1 site)"/>
</dbReference>
<dbReference type="iPTMnet" id="P10586"/>
<dbReference type="PhosphoSitePlus" id="P10586"/>
<dbReference type="SwissPalm" id="P10586"/>
<dbReference type="BioMuta" id="PTPRF"/>
<dbReference type="DMDM" id="226709091"/>
<dbReference type="jPOST" id="P10586"/>
<dbReference type="MassIVE" id="P10586"/>
<dbReference type="PaxDb" id="9606-ENSP00000353030"/>
<dbReference type="PeptideAtlas" id="P10586"/>
<dbReference type="ProteomicsDB" id="52612">
    <molecule id="P10586-1"/>
</dbReference>
<dbReference type="ProteomicsDB" id="52613">
    <molecule id="P10586-2"/>
</dbReference>
<dbReference type="Pumba" id="P10586"/>
<dbReference type="ABCD" id="P10586">
    <property type="antibodies" value="7 sequenced antibodies"/>
</dbReference>
<dbReference type="Antibodypedia" id="2499">
    <property type="antibodies" value="318 antibodies from 34 providers"/>
</dbReference>
<dbReference type="DNASU" id="5792"/>
<dbReference type="Ensembl" id="ENST00000359947.9">
    <molecule id="P10586-1"/>
    <property type="protein sequence ID" value="ENSP00000353030.4"/>
    <property type="gene ID" value="ENSG00000142949.17"/>
</dbReference>
<dbReference type="Ensembl" id="ENST00000438120.5">
    <molecule id="P10586-2"/>
    <property type="protein sequence ID" value="ENSP00000398822.1"/>
    <property type="gene ID" value="ENSG00000142949.17"/>
</dbReference>
<dbReference type="GeneID" id="5792"/>
<dbReference type="KEGG" id="hsa:5792"/>
<dbReference type="MANE-Select" id="ENST00000359947.9">
    <property type="protein sequence ID" value="ENSP00000353030.4"/>
    <property type="RefSeq nucleotide sequence ID" value="NM_002840.5"/>
    <property type="RefSeq protein sequence ID" value="NP_002831.2"/>
</dbReference>
<dbReference type="UCSC" id="uc001cjr.4">
    <molecule id="P10586-1"/>
    <property type="organism name" value="human"/>
</dbReference>
<dbReference type="AGR" id="HGNC:9670"/>
<dbReference type="CTD" id="5792"/>
<dbReference type="DisGeNET" id="5792"/>
<dbReference type="GeneCards" id="PTPRF"/>
<dbReference type="HGNC" id="HGNC:9670">
    <property type="gene designation" value="PTPRF"/>
</dbReference>
<dbReference type="HPA" id="ENSG00000142949">
    <property type="expression patterns" value="Low tissue specificity"/>
</dbReference>
<dbReference type="MalaCards" id="PTPRF"/>
<dbReference type="MIM" id="179590">
    <property type="type" value="gene"/>
</dbReference>
<dbReference type="MIM" id="616001">
    <property type="type" value="phenotype"/>
</dbReference>
<dbReference type="neXtProt" id="NX_P10586"/>
<dbReference type="OpenTargets" id="ENSG00000142949"/>
<dbReference type="Orphanet" id="180188">
    <property type="disease" value="Isolated congenital breast hypoplasia/aplasia"/>
</dbReference>
<dbReference type="PharmGKB" id="PA34015"/>
<dbReference type="VEuPathDB" id="HostDB:ENSG00000142949"/>
<dbReference type="eggNOG" id="KOG4228">
    <property type="taxonomic scope" value="Eukaryota"/>
</dbReference>
<dbReference type="GeneTree" id="ENSGT00940000155060"/>
<dbReference type="HOGENOM" id="CLU_001645_4_0_1"/>
<dbReference type="InParanoid" id="P10586"/>
<dbReference type="OMA" id="YWAAENE"/>
<dbReference type="OrthoDB" id="10253954at2759"/>
<dbReference type="PAN-GO" id="P10586">
    <property type="GO annotations" value="3 GO annotations based on evolutionary models"/>
</dbReference>
<dbReference type="PhylomeDB" id="P10586"/>
<dbReference type="TreeFam" id="TF312900"/>
<dbReference type="BRENDA" id="3.1.3.48">
    <property type="organism ID" value="2681"/>
</dbReference>
<dbReference type="PathwayCommons" id="P10586"/>
<dbReference type="Reactome" id="R-HSA-388844">
    <property type="pathway name" value="Receptor-type tyrosine-protein phosphatases"/>
</dbReference>
<dbReference type="Reactome" id="R-HSA-77387">
    <property type="pathway name" value="Insulin receptor recycling"/>
</dbReference>
<dbReference type="Reactome" id="R-HSA-8849932">
    <property type="pathway name" value="Synaptic adhesion-like molecules"/>
</dbReference>
<dbReference type="SignaLink" id="P10586"/>
<dbReference type="SIGNOR" id="P10586"/>
<dbReference type="BioGRID-ORCS" id="5792">
    <property type="hits" value="10 hits in 1172 CRISPR screens"/>
</dbReference>
<dbReference type="CD-CODE" id="FB4E32DD">
    <property type="entry name" value="Presynaptic clusters and postsynaptic densities"/>
</dbReference>
<dbReference type="ChiTaRS" id="PTPRF">
    <property type="organism name" value="human"/>
</dbReference>
<dbReference type="EvolutionaryTrace" id="P10586"/>
<dbReference type="GeneWiki" id="PTPRF"/>
<dbReference type="GenomeRNAi" id="5792"/>
<dbReference type="Pharos" id="P10586">
    <property type="development level" value="Tchem"/>
</dbReference>
<dbReference type="PRO" id="PR:P10586"/>
<dbReference type="Proteomes" id="UP000005640">
    <property type="component" value="Chromosome 1"/>
</dbReference>
<dbReference type="RNAct" id="P10586">
    <property type="molecule type" value="protein"/>
</dbReference>
<dbReference type="Bgee" id="ENSG00000142949">
    <property type="expression patterns" value="Expressed in gingival epithelium and 200 other cell types or tissues"/>
</dbReference>
<dbReference type="ExpressionAtlas" id="P10586">
    <property type="expression patterns" value="baseline and differential"/>
</dbReference>
<dbReference type="GO" id="GO:0070062">
    <property type="term" value="C:extracellular exosome"/>
    <property type="evidence" value="ECO:0007005"/>
    <property type="project" value="UniProtKB"/>
</dbReference>
<dbReference type="GO" id="GO:0043005">
    <property type="term" value="C:neuron projection"/>
    <property type="evidence" value="ECO:0007669"/>
    <property type="project" value="Ensembl"/>
</dbReference>
<dbReference type="GO" id="GO:0043025">
    <property type="term" value="C:neuronal cell body"/>
    <property type="evidence" value="ECO:0007669"/>
    <property type="project" value="Ensembl"/>
</dbReference>
<dbReference type="GO" id="GO:0005886">
    <property type="term" value="C:plasma membrane"/>
    <property type="evidence" value="ECO:0000304"/>
    <property type="project" value="Reactome"/>
</dbReference>
<dbReference type="GO" id="GO:0050839">
    <property type="term" value="F:cell adhesion molecule binding"/>
    <property type="evidence" value="ECO:0000353"/>
    <property type="project" value="SynGO-UCL"/>
</dbReference>
<dbReference type="GO" id="GO:0035373">
    <property type="term" value="F:chondroitin sulfate proteoglycan binding"/>
    <property type="evidence" value="ECO:0007669"/>
    <property type="project" value="Ensembl"/>
</dbReference>
<dbReference type="GO" id="GO:0008201">
    <property type="term" value="F:heparin binding"/>
    <property type="evidence" value="ECO:0007669"/>
    <property type="project" value="UniProtKB-KW"/>
</dbReference>
<dbReference type="GO" id="GO:0004721">
    <property type="term" value="F:phosphoprotein phosphatase activity"/>
    <property type="evidence" value="ECO:0000314"/>
    <property type="project" value="MGI"/>
</dbReference>
<dbReference type="GO" id="GO:0004725">
    <property type="term" value="F:protein tyrosine phosphatase activity"/>
    <property type="evidence" value="ECO:0000314"/>
    <property type="project" value="UniProtKB"/>
</dbReference>
<dbReference type="GO" id="GO:0044877">
    <property type="term" value="F:protein-containing complex binding"/>
    <property type="evidence" value="ECO:0007669"/>
    <property type="project" value="Ensembl"/>
</dbReference>
<dbReference type="GO" id="GO:0005001">
    <property type="term" value="F:transmembrane receptor protein tyrosine phosphatase activity"/>
    <property type="evidence" value="ECO:0000304"/>
    <property type="project" value="ProtInc"/>
</dbReference>
<dbReference type="GO" id="GO:0007155">
    <property type="term" value="P:cell adhesion"/>
    <property type="evidence" value="ECO:0000304"/>
    <property type="project" value="ProtInc"/>
</dbReference>
<dbReference type="GO" id="GO:0016477">
    <property type="term" value="P:cell migration"/>
    <property type="evidence" value="ECO:0000315"/>
    <property type="project" value="UniProtKB"/>
</dbReference>
<dbReference type="GO" id="GO:0007185">
    <property type="term" value="P:cell surface receptor protein tyrosine phosphatase signaling pathway"/>
    <property type="evidence" value="ECO:0000304"/>
    <property type="project" value="ProtInc"/>
</dbReference>
<dbReference type="GO" id="GO:1900121">
    <property type="term" value="P:negative regulation of receptor binding"/>
    <property type="evidence" value="ECO:0000315"/>
    <property type="project" value="UniProtKB"/>
</dbReference>
<dbReference type="GO" id="GO:0031102">
    <property type="term" value="P:neuron projection regeneration"/>
    <property type="evidence" value="ECO:0007669"/>
    <property type="project" value="Ensembl"/>
</dbReference>
<dbReference type="GO" id="GO:0035335">
    <property type="term" value="P:peptidyl-tyrosine dephosphorylation"/>
    <property type="evidence" value="ECO:0000315"/>
    <property type="project" value="UniProtKB"/>
</dbReference>
<dbReference type="GO" id="GO:0048679">
    <property type="term" value="P:regulation of axon regeneration"/>
    <property type="evidence" value="ECO:0007669"/>
    <property type="project" value="Ensembl"/>
</dbReference>
<dbReference type="GO" id="GO:0007165">
    <property type="term" value="P:signal transduction"/>
    <property type="evidence" value="ECO:0000318"/>
    <property type="project" value="GO_Central"/>
</dbReference>
<dbReference type="GO" id="GO:0099560">
    <property type="term" value="P:synaptic membrane adhesion"/>
    <property type="evidence" value="ECO:0000314"/>
    <property type="project" value="SynGO"/>
</dbReference>
<dbReference type="CDD" id="cd00063">
    <property type="entry name" value="FN3"/>
    <property type="match status" value="8"/>
</dbReference>
<dbReference type="CDD" id="cd05738">
    <property type="entry name" value="IgI_2_RPTP_IIa_LAR_like"/>
    <property type="match status" value="1"/>
</dbReference>
<dbReference type="CDD" id="cd05739">
    <property type="entry name" value="IgI_3_RPTP_IIa_LAR_like"/>
    <property type="match status" value="1"/>
</dbReference>
<dbReference type="CDD" id="cd14629">
    <property type="entry name" value="R-PTP-F-2"/>
    <property type="match status" value="1"/>
</dbReference>
<dbReference type="CDD" id="cd14626">
    <property type="entry name" value="R-PTPc-F-1"/>
    <property type="match status" value="1"/>
</dbReference>
<dbReference type="FunFam" id="2.60.40.10:FF:000010">
    <property type="entry name" value="receptor-type tyrosine-protein phosphatase delta isoform X1"/>
    <property type="match status" value="1"/>
</dbReference>
<dbReference type="FunFam" id="2.60.40.10:FF:000027">
    <property type="entry name" value="receptor-type tyrosine-protein phosphatase delta isoform X1"/>
    <property type="match status" value="1"/>
</dbReference>
<dbReference type="FunFam" id="2.60.40.10:FF:000036">
    <property type="entry name" value="receptor-type tyrosine-protein phosphatase delta isoform X1"/>
    <property type="match status" value="1"/>
</dbReference>
<dbReference type="FunFam" id="2.60.40.10:FF:000066">
    <property type="entry name" value="receptor-type tyrosine-protein phosphatase delta isoform X1"/>
    <property type="match status" value="1"/>
</dbReference>
<dbReference type="FunFam" id="2.60.40.10:FF:000144">
    <property type="entry name" value="receptor-type tyrosine-protein phosphatase delta isoform X1"/>
    <property type="match status" value="1"/>
</dbReference>
<dbReference type="FunFam" id="2.60.40.10:FF:000015">
    <property type="entry name" value="receptor-type tyrosine-protein phosphatase delta isoform X2"/>
    <property type="match status" value="1"/>
</dbReference>
<dbReference type="FunFam" id="2.60.40.10:FF:000023">
    <property type="entry name" value="receptor-type tyrosine-protein phosphatase delta isoform X2"/>
    <property type="match status" value="1"/>
</dbReference>
<dbReference type="FunFam" id="2.60.40.10:FF:000082">
    <property type="entry name" value="receptor-type tyrosine-protein phosphatase delta isoform X2"/>
    <property type="match status" value="1"/>
</dbReference>
<dbReference type="FunFam" id="2.60.40.10:FF:000128">
    <property type="entry name" value="receptor-type tyrosine-protein phosphatase delta isoform X2"/>
    <property type="match status" value="1"/>
</dbReference>
<dbReference type="FunFam" id="3.90.190.10:FF:000002">
    <property type="entry name" value="receptor-type tyrosine-protein phosphatase delta isoform X2"/>
    <property type="match status" value="1"/>
</dbReference>
<dbReference type="FunFam" id="3.90.190.10:FF:000001">
    <property type="entry name" value="Receptor-type tyrosine-protein phosphatase F isoform A"/>
    <property type="match status" value="1"/>
</dbReference>
<dbReference type="FunFam" id="2.60.40.10:FF:000098">
    <property type="entry name" value="receptor-type tyrosine-protein phosphatase F isoform X1"/>
    <property type="match status" value="1"/>
</dbReference>
<dbReference type="FunFam" id="2.60.40.10:FF:000353">
    <property type="entry name" value="receptor-type tyrosine-protein phosphatase F isoform X1"/>
    <property type="match status" value="1"/>
</dbReference>
<dbReference type="Gene3D" id="2.60.40.10">
    <property type="entry name" value="Immunoglobulins"/>
    <property type="match status" value="11"/>
</dbReference>
<dbReference type="Gene3D" id="3.90.190.10">
    <property type="entry name" value="Protein tyrosine phosphatase superfamily"/>
    <property type="match status" value="2"/>
</dbReference>
<dbReference type="InterPro" id="IPR003961">
    <property type="entry name" value="FN3_dom"/>
</dbReference>
<dbReference type="InterPro" id="IPR036116">
    <property type="entry name" value="FN3_sf"/>
</dbReference>
<dbReference type="InterPro" id="IPR007110">
    <property type="entry name" value="Ig-like_dom"/>
</dbReference>
<dbReference type="InterPro" id="IPR036179">
    <property type="entry name" value="Ig-like_dom_sf"/>
</dbReference>
<dbReference type="InterPro" id="IPR013783">
    <property type="entry name" value="Ig-like_fold"/>
</dbReference>
<dbReference type="InterPro" id="IPR013098">
    <property type="entry name" value="Ig_I-set"/>
</dbReference>
<dbReference type="InterPro" id="IPR003599">
    <property type="entry name" value="Ig_sub"/>
</dbReference>
<dbReference type="InterPro" id="IPR003598">
    <property type="entry name" value="Ig_sub2"/>
</dbReference>
<dbReference type="InterPro" id="IPR029021">
    <property type="entry name" value="Prot-tyrosine_phosphatase-like"/>
</dbReference>
<dbReference type="InterPro" id="IPR000242">
    <property type="entry name" value="PTP_cat"/>
</dbReference>
<dbReference type="InterPro" id="IPR050713">
    <property type="entry name" value="RTP_Phos/Ushers"/>
</dbReference>
<dbReference type="InterPro" id="IPR016130">
    <property type="entry name" value="Tyr_Pase_AS"/>
</dbReference>
<dbReference type="InterPro" id="IPR003595">
    <property type="entry name" value="Tyr_Pase_cat"/>
</dbReference>
<dbReference type="InterPro" id="IPR000387">
    <property type="entry name" value="Tyr_Pase_dom"/>
</dbReference>
<dbReference type="PANTHER" id="PTHR46957">
    <property type="entry name" value="CYTOKINE RECEPTOR"/>
    <property type="match status" value="1"/>
</dbReference>
<dbReference type="PANTHER" id="PTHR46957:SF9">
    <property type="entry name" value="PROTEIN-TYROSINE-PHOSPHATASE"/>
    <property type="match status" value="1"/>
</dbReference>
<dbReference type="Pfam" id="PF00041">
    <property type="entry name" value="fn3"/>
    <property type="match status" value="7"/>
</dbReference>
<dbReference type="Pfam" id="PF07679">
    <property type="entry name" value="I-set"/>
    <property type="match status" value="3"/>
</dbReference>
<dbReference type="Pfam" id="PF00102">
    <property type="entry name" value="Y_phosphatase"/>
    <property type="match status" value="2"/>
</dbReference>
<dbReference type="PRINTS" id="PR00014">
    <property type="entry name" value="FNTYPEIII"/>
</dbReference>
<dbReference type="PRINTS" id="PR00700">
    <property type="entry name" value="PRTYPHPHTASE"/>
</dbReference>
<dbReference type="SMART" id="SM00060">
    <property type="entry name" value="FN3"/>
    <property type="match status" value="8"/>
</dbReference>
<dbReference type="SMART" id="SM00409">
    <property type="entry name" value="IG"/>
    <property type="match status" value="3"/>
</dbReference>
<dbReference type="SMART" id="SM00408">
    <property type="entry name" value="IGc2"/>
    <property type="match status" value="3"/>
</dbReference>
<dbReference type="SMART" id="SM00194">
    <property type="entry name" value="PTPc"/>
    <property type="match status" value="2"/>
</dbReference>
<dbReference type="SMART" id="SM00404">
    <property type="entry name" value="PTPc_motif"/>
    <property type="match status" value="2"/>
</dbReference>
<dbReference type="SUPFAM" id="SSF52799">
    <property type="entry name" value="(Phosphotyrosine protein) phosphatases II"/>
    <property type="match status" value="2"/>
</dbReference>
<dbReference type="SUPFAM" id="SSF49265">
    <property type="entry name" value="Fibronectin type III"/>
    <property type="match status" value="5"/>
</dbReference>
<dbReference type="SUPFAM" id="SSF48726">
    <property type="entry name" value="Immunoglobulin"/>
    <property type="match status" value="3"/>
</dbReference>
<dbReference type="PROSITE" id="PS50853">
    <property type="entry name" value="FN3"/>
    <property type="match status" value="8"/>
</dbReference>
<dbReference type="PROSITE" id="PS50835">
    <property type="entry name" value="IG_LIKE"/>
    <property type="match status" value="3"/>
</dbReference>
<dbReference type="PROSITE" id="PS00383">
    <property type="entry name" value="TYR_PHOSPHATASE_1"/>
    <property type="match status" value="2"/>
</dbReference>
<dbReference type="PROSITE" id="PS50056">
    <property type="entry name" value="TYR_PHOSPHATASE_2"/>
    <property type="match status" value="2"/>
</dbReference>
<dbReference type="PROSITE" id="PS50055">
    <property type="entry name" value="TYR_PHOSPHATASE_PTP"/>
    <property type="match status" value="2"/>
</dbReference>
<keyword id="KW-0002">3D-structure</keyword>
<keyword id="KW-0025">Alternative splicing</keyword>
<keyword id="KW-0130">Cell adhesion</keyword>
<keyword id="KW-1015">Disulfide bond</keyword>
<keyword id="KW-0325">Glycoprotein</keyword>
<keyword id="KW-0358">Heparin-binding</keyword>
<keyword id="KW-0378">Hydrolase</keyword>
<keyword id="KW-0393">Immunoglobulin domain</keyword>
<keyword id="KW-0472">Membrane</keyword>
<keyword id="KW-0597">Phosphoprotein</keyword>
<keyword id="KW-0904">Protein phosphatase</keyword>
<keyword id="KW-1267">Proteomics identification</keyword>
<keyword id="KW-0675">Receptor</keyword>
<keyword id="KW-1185">Reference proteome</keyword>
<keyword id="KW-0677">Repeat</keyword>
<keyword id="KW-0732">Signal</keyword>
<keyword id="KW-0812">Transmembrane</keyword>
<keyword id="KW-1133">Transmembrane helix</keyword>
<reference key="1">
    <citation type="journal article" date="1988" name="J. Exp. Med.">
        <title>A new member of the immunoglobulin superfamily that has a cytoplasmic region homologous to the leukocyte common antigen.</title>
        <authorList>
            <person name="Streuli M."/>
            <person name="Krueger N.X."/>
            <person name="Hall L.R."/>
            <person name="Schlossman S.F."/>
            <person name="Saito H."/>
        </authorList>
    </citation>
    <scope>NUCLEOTIDE SEQUENCE [MRNA] (ISOFORM 1)</scope>
    <source>
        <tissue>Tonsil</tissue>
    </source>
</reference>
<reference key="2">
    <citation type="journal article" date="2004" name="J. Mol. Biol.">
        <title>Alternative splice variants encoding unstable protein domains exist in the human brain.</title>
        <authorList>
            <person name="Homma K."/>
            <person name="Kikuno R.F."/>
            <person name="Nagase T."/>
            <person name="Ohara O."/>
            <person name="Nishikawa K."/>
        </authorList>
    </citation>
    <scope>NUCLEOTIDE SEQUENCE [MRNA] (ISOFORM 2)</scope>
    <source>
        <tissue>Brain</tissue>
    </source>
</reference>
<reference key="3">
    <citation type="journal article" date="2006" name="Nature">
        <title>The DNA sequence and biological annotation of human chromosome 1.</title>
        <authorList>
            <person name="Gregory S.G."/>
            <person name="Barlow K.F."/>
            <person name="McLay K.E."/>
            <person name="Kaul R."/>
            <person name="Swarbreck D."/>
            <person name="Dunham A."/>
            <person name="Scott C.E."/>
            <person name="Howe K.L."/>
            <person name="Woodfine K."/>
            <person name="Spencer C.C.A."/>
            <person name="Jones M.C."/>
            <person name="Gillson C."/>
            <person name="Searle S."/>
            <person name="Zhou Y."/>
            <person name="Kokocinski F."/>
            <person name="McDonald L."/>
            <person name="Evans R."/>
            <person name="Phillips K."/>
            <person name="Atkinson A."/>
            <person name="Cooper R."/>
            <person name="Jones C."/>
            <person name="Hall R.E."/>
            <person name="Andrews T.D."/>
            <person name="Lloyd C."/>
            <person name="Ainscough R."/>
            <person name="Almeida J.P."/>
            <person name="Ambrose K.D."/>
            <person name="Anderson F."/>
            <person name="Andrew R.W."/>
            <person name="Ashwell R.I.S."/>
            <person name="Aubin K."/>
            <person name="Babbage A.K."/>
            <person name="Bagguley C.L."/>
            <person name="Bailey J."/>
            <person name="Beasley H."/>
            <person name="Bethel G."/>
            <person name="Bird C.P."/>
            <person name="Bray-Allen S."/>
            <person name="Brown J.Y."/>
            <person name="Brown A.J."/>
            <person name="Buckley D."/>
            <person name="Burton J."/>
            <person name="Bye J."/>
            <person name="Carder C."/>
            <person name="Chapman J.C."/>
            <person name="Clark S.Y."/>
            <person name="Clarke G."/>
            <person name="Clee C."/>
            <person name="Cobley V."/>
            <person name="Collier R.E."/>
            <person name="Corby N."/>
            <person name="Coville G.J."/>
            <person name="Davies J."/>
            <person name="Deadman R."/>
            <person name="Dunn M."/>
            <person name="Earthrowl M."/>
            <person name="Ellington A.G."/>
            <person name="Errington H."/>
            <person name="Frankish A."/>
            <person name="Frankland J."/>
            <person name="French L."/>
            <person name="Garner P."/>
            <person name="Garnett J."/>
            <person name="Gay L."/>
            <person name="Ghori M.R.J."/>
            <person name="Gibson R."/>
            <person name="Gilby L.M."/>
            <person name="Gillett W."/>
            <person name="Glithero R.J."/>
            <person name="Grafham D.V."/>
            <person name="Griffiths C."/>
            <person name="Griffiths-Jones S."/>
            <person name="Grocock R."/>
            <person name="Hammond S."/>
            <person name="Harrison E.S.I."/>
            <person name="Hart E."/>
            <person name="Haugen E."/>
            <person name="Heath P.D."/>
            <person name="Holmes S."/>
            <person name="Holt K."/>
            <person name="Howden P.J."/>
            <person name="Hunt A.R."/>
            <person name="Hunt S.E."/>
            <person name="Hunter G."/>
            <person name="Isherwood J."/>
            <person name="James R."/>
            <person name="Johnson C."/>
            <person name="Johnson D."/>
            <person name="Joy A."/>
            <person name="Kay M."/>
            <person name="Kershaw J.K."/>
            <person name="Kibukawa M."/>
            <person name="Kimberley A.M."/>
            <person name="King A."/>
            <person name="Knights A.J."/>
            <person name="Lad H."/>
            <person name="Laird G."/>
            <person name="Lawlor S."/>
            <person name="Leongamornlert D.A."/>
            <person name="Lloyd D.M."/>
            <person name="Loveland J."/>
            <person name="Lovell J."/>
            <person name="Lush M.J."/>
            <person name="Lyne R."/>
            <person name="Martin S."/>
            <person name="Mashreghi-Mohammadi M."/>
            <person name="Matthews L."/>
            <person name="Matthews N.S.W."/>
            <person name="McLaren S."/>
            <person name="Milne S."/>
            <person name="Mistry S."/>
            <person name="Moore M.J.F."/>
            <person name="Nickerson T."/>
            <person name="O'Dell C.N."/>
            <person name="Oliver K."/>
            <person name="Palmeiri A."/>
            <person name="Palmer S.A."/>
            <person name="Parker A."/>
            <person name="Patel D."/>
            <person name="Pearce A.V."/>
            <person name="Peck A.I."/>
            <person name="Pelan S."/>
            <person name="Phelps K."/>
            <person name="Phillimore B.J."/>
            <person name="Plumb R."/>
            <person name="Rajan J."/>
            <person name="Raymond C."/>
            <person name="Rouse G."/>
            <person name="Saenphimmachak C."/>
            <person name="Sehra H.K."/>
            <person name="Sheridan E."/>
            <person name="Shownkeen R."/>
            <person name="Sims S."/>
            <person name="Skuce C.D."/>
            <person name="Smith M."/>
            <person name="Steward C."/>
            <person name="Subramanian S."/>
            <person name="Sycamore N."/>
            <person name="Tracey A."/>
            <person name="Tromans A."/>
            <person name="Van Helmond Z."/>
            <person name="Wall M."/>
            <person name="Wallis J.M."/>
            <person name="White S."/>
            <person name="Whitehead S.L."/>
            <person name="Wilkinson J.E."/>
            <person name="Willey D.L."/>
            <person name="Williams H."/>
            <person name="Wilming L."/>
            <person name="Wray P.W."/>
            <person name="Wu Z."/>
            <person name="Coulson A."/>
            <person name="Vaudin M."/>
            <person name="Sulston J.E."/>
            <person name="Durbin R.M."/>
            <person name="Hubbard T."/>
            <person name="Wooster R."/>
            <person name="Dunham I."/>
            <person name="Carter N.P."/>
            <person name="McVean G."/>
            <person name="Ross M.T."/>
            <person name="Harrow J."/>
            <person name="Olson M.V."/>
            <person name="Beck S."/>
            <person name="Rogers J."/>
            <person name="Bentley D.R."/>
        </authorList>
    </citation>
    <scope>NUCLEOTIDE SEQUENCE [LARGE SCALE GENOMIC DNA]</scope>
</reference>
<reference key="4">
    <citation type="submission" date="2005-09" db="EMBL/GenBank/DDBJ databases">
        <authorList>
            <person name="Mural R.J."/>
            <person name="Istrail S."/>
            <person name="Sutton G.G."/>
            <person name="Florea L."/>
            <person name="Halpern A.L."/>
            <person name="Mobarry C.M."/>
            <person name="Lippert R."/>
            <person name="Walenz B."/>
            <person name="Shatkay H."/>
            <person name="Dew I."/>
            <person name="Miller J.R."/>
            <person name="Flanigan M.J."/>
            <person name="Edwards N.J."/>
            <person name="Bolanos R."/>
            <person name="Fasulo D."/>
            <person name="Halldorsson B.V."/>
            <person name="Hannenhalli S."/>
            <person name="Turner R."/>
            <person name="Yooseph S."/>
            <person name="Lu F."/>
            <person name="Nusskern D.R."/>
            <person name="Shue B.C."/>
            <person name="Zheng X.H."/>
            <person name="Zhong F."/>
            <person name="Delcher A.L."/>
            <person name="Huson D.H."/>
            <person name="Kravitz S.A."/>
            <person name="Mouchard L."/>
            <person name="Reinert K."/>
            <person name="Remington K.A."/>
            <person name="Clark A.G."/>
            <person name="Waterman M.S."/>
            <person name="Eichler E.E."/>
            <person name="Adams M.D."/>
            <person name="Hunkapiller M.W."/>
            <person name="Myers E.W."/>
            <person name="Venter J.C."/>
        </authorList>
    </citation>
    <scope>NUCLEOTIDE SEQUENCE [LARGE SCALE GENOMIC DNA]</scope>
</reference>
<reference key="5">
    <citation type="journal article" date="2004" name="Genome Res.">
        <title>The status, quality, and expansion of the NIH full-length cDNA project: the Mammalian Gene Collection (MGC).</title>
        <authorList>
            <consortium name="The MGC Project Team"/>
        </authorList>
    </citation>
    <scope>NUCLEOTIDE SEQUENCE [LARGE SCALE MRNA] (ISOFORM 2)</scope>
    <source>
        <tissue>Retinoblastoma</tissue>
    </source>
</reference>
<reference key="6">
    <citation type="journal article" date="1989" name="Proc. Natl. Acad. Sci. U.S.A.">
        <title>A family of receptor-linked protein tyrosine phosphatases in humans and Drosophila.</title>
        <authorList>
            <person name="Streuli M."/>
            <person name="Krueger N.X."/>
            <person name="Tsai A.Y.M."/>
            <person name="Saito H."/>
        </authorList>
    </citation>
    <scope>MUTAGENESIS</scope>
</reference>
<reference key="7">
    <citation type="journal article" date="1990" name="EMBO J.">
        <title>Distinct functional roles of the two intracellular phosphatase like domains of the receptor-linked protein tyrosine phosphatases LCA and LAR.</title>
        <authorList>
            <person name="Streuli M."/>
            <person name="Krueger N.X."/>
            <person name="Thai T."/>
            <person name="Tang M."/>
            <person name="Saito H."/>
        </authorList>
    </citation>
    <scope>MUTAGENESIS</scope>
</reference>
<reference key="8">
    <citation type="journal article" date="1997" name="J. Biol. Chem.">
        <title>Functional association between the insulin receptor and the transmembrane protein-tyrosine phosphatase LAR in intact cells.</title>
        <authorList>
            <person name="Ahmad F."/>
            <person name="Goldstein B.J."/>
        </authorList>
    </citation>
    <scope>INTERACTION WITH INSR</scope>
</reference>
<reference key="9">
    <citation type="journal article" date="1998" name="J. Biol. Chem.">
        <title>Liprins, a family of LAR transmembrane protein-tyrosine phosphatase-interacting proteins.</title>
        <authorList>
            <person name="Serra-Pages C."/>
            <person name="Medley Q.G."/>
            <person name="Tang M."/>
            <person name="Hart A."/>
            <person name="Streuli M."/>
        </authorList>
    </citation>
    <scope>INTERACTION WITH PPFIA1; PPFIA2 AND PPFIA3</scope>
</reference>
<reference key="10">
    <citation type="journal article" date="2005" name="J. Proteome Res.">
        <title>Human plasma N-glycoproteome analysis by immunoaffinity subtraction, hydrazide chemistry, and mass spectrometry.</title>
        <authorList>
            <person name="Liu T."/>
            <person name="Qian W.-J."/>
            <person name="Gritsenko M.A."/>
            <person name="Camp D.G. II"/>
            <person name="Monroe M.E."/>
            <person name="Moore R.J."/>
            <person name="Smith R.D."/>
        </authorList>
    </citation>
    <scope>GLYCOSYLATION [LARGE SCALE ANALYSIS] AT ASN-966</scope>
    <source>
        <tissue>Plasma</tissue>
    </source>
</reference>
<reference key="11">
    <citation type="journal article" date="2009" name="Nat. Biotechnol.">
        <title>Mass-spectrometric identification and relative quantification of N-linked cell surface glycoproteins.</title>
        <authorList>
            <person name="Wollscheid B."/>
            <person name="Bausch-Fluck D."/>
            <person name="Henderson C."/>
            <person name="O'Brien R."/>
            <person name="Bibel M."/>
            <person name="Schiess R."/>
            <person name="Aebersold R."/>
            <person name="Watts J.D."/>
        </authorList>
    </citation>
    <scope>GLYCOSYLATION [LARGE SCALE ANALYSIS] AT ASN-966</scope>
    <source>
        <tissue>Leukemic T-cell</tissue>
    </source>
</reference>
<reference key="12">
    <citation type="journal article" date="2011" name="BMC Syst. Biol.">
        <title>Initial characterization of the human central proteome.</title>
        <authorList>
            <person name="Burkard T.R."/>
            <person name="Planyavsky M."/>
            <person name="Kaupe I."/>
            <person name="Breitwieser F.P."/>
            <person name="Buerckstuemmer T."/>
            <person name="Bennett K.L."/>
            <person name="Superti-Furga G."/>
            <person name="Colinge J."/>
        </authorList>
    </citation>
    <scope>IDENTIFICATION BY MASS SPECTROMETRY [LARGE SCALE ANALYSIS]</scope>
</reference>
<reference key="13">
    <citation type="journal article" date="2013" name="Mol. Cell. Biol.">
        <title>Receptor protein tyrosine phosphatase-receptor tyrosine kinase substrate screen identifies EphA2 as a target for LAR in cell migration.</title>
        <authorList>
            <person name="Lee H."/>
            <person name="Bennett A.M."/>
        </authorList>
    </citation>
    <scope>FUNCTION IN EPHA2 DEPHOSPHORYLATION</scope>
</reference>
<reference key="14">
    <citation type="journal article" date="2014" name="J. Proteomics">
        <title>An enzyme assisted RP-RPLC approach for in-depth analysis of human liver phosphoproteome.</title>
        <authorList>
            <person name="Bian Y."/>
            <person name="Song C."/>
            <person name="Cheng K."/>
            <person name="Dong M."/>
            <person name="Wang F."/>
            <person name="Huang J."/>
            <person name="Sun D."/>
            <person name="Wang L."/>
            <person name="Ye M."/>
            <person name="Zou H."/>
        </authorList>
    </citation>
    <scope>PHOSPHORYLATION [LARGE SCALE ANALYSIS] AT SER-1305</scope>
    <scope>IDENTIFICATION BY MASS SPECTROMETRY [LARGE SCALE ANALYSIS]</scope>
    <source>
        <tissue>Liver</tissue>
    </source>
</reference>
<reference key="15">
    <citation type="journal article" date="1999" name="Cell">
        <title>Crystal structure of the tandem phosphatase domains of RPTP LAR.</title>
        <authorList>
            <person name="Nam H.J."/>
            <person name="Poy F."/>
            <person name="Krueger N.X."/>
            <person name="Saito H."/>
            <person name="Frederick C.A."/>
        </authorList>
    </citation>
    <scope>X-RAY CRYSTALLOGRAPHY (2.0 ANGSTROMS) OF 1334-1897</scope>
    <scope>FUNCTION</scope>
    <scope>MUTAGENESIS OF CYS-1548</scope>
</reference>
<reference key="16">
    <citation type="submission" date="2007-08" db="PDB data bank">
        <title>Solution structures of FN3 domains of human receptor-type tyrosine-protein phosphatase F.</title>
        <authorList>
            <consortium name="RIKEN structural genomics initiative (RSGI)"/>
        </authorList>
    </citation>
    <scope>STRUCTURE BY NMR OF 319-415 AND 596-1010</scope>
</reference>
<reference key="17">
    <citation type="journal article" date="2014" name="Hum. Genet.">
        <title>Homozygous truncating PTPRF mutation causes athelia.</title>
        <authorList>
            <person name="Borck G."/>
            <person name="de Vries L."/>
            <person name="Wu H.J."/>
            <person name="Smirin-Yosef P."/>
            <person name="Nurnberg G."/>
            <person name="Lagovsky I."/>
            <person name="Ishida L.H."/>
            <person name="Thierry P."/>
            <person name="Wieczorek D."/>
            <person name="Nurnberg P."/>
            <person name="Foley J."/>
            <person name="Kubisch C."/>
            <person name="Basel-Vanagaite L."/>
        </authorList>
    </citation>
    <scope>INVOLVEMENT IN BNAH2</scope>
</reference>
<name>PTPRF_HUMAN</name>
<sequence>MAPEPAPGRTMVPLVPALVMLGLVAGAHGDSKPVFIKVPEDQTGLSGGVASFVCQATGEPKPRITWMKKGKKVSSQRFEVIEFDDGAGSVLRIQPLRVQRDEAIYECTATNSLGEINTSAKLSVLEEEQLPPGFPSIDMGPQLKVVEKARTATMLCAAGGNPDPEISWFKDFLPVDPATSNGRIKQLRSGALQIESSEESDQGKYECVATNSAGTRYSAPANLYVRVRRVAPRFSIPPSSQEVMPGGSVNLTCVAVGAPMPYVKWMMGAEELTKEDEMPVGRNVLELSNVVRSANYTCVAISSLGMIEATAQVTVKALPKPPIDLVVTETTATSVTLTWDSGNSEPVTYYGIQYRAAGTEGPFQEVDGVATTRYSIGGLSPFSEYAFRVLAVNSIGRGPPSEAVRARTGEQAPSSPPRRVQARMLSASTMLVQWEPPEEPNGLVRGYRVYYTPDSRRPPNAWHKHNTDAGLLTTVGSLLPGITYSLRVLAFTAVGDGPPSPTIQVKTQQGVPAQPADFQAEVESDTRIQLSWLLPPQERIIMYELVYWAAEDEDQQHKVTFDPTSSYTLEDLKPDTLYRFQLAARSDMGVGVFTPTIEARTAQSTPSAPPQKVMCVSMGSTTVRVSWVPPPADSRNGVITQYSVAYEAVDGEDRGRHVVDGISREHSSWDLVGLEKWTEYRVWVRAHTDVGPGPESSPVLVRTDEDVPSGPPRKVEVEPLNSTAVHVYWKLPVPSKQHGQIRGYQVTYVRLENGEPRGLPIIQDVMLAEAQWRPEESEDYETTISGLTPETTYSVTVAAYTTKGDGARSKPKIVTTTGAVPGRPTMMISTTAMNTALLQWHPPKELPGELLGYRLQYCRADEARPNTIDFGKDDQHFTVTGLHKGTTYIFRLAAKNRAGLGEEFEKEIRTPEDLPSGFPQNLHVTGLTTSTTELAWDPPVLAERNGRIISYTVVFRDINSQQELQNITTDTRFTLTGLKPDTTYDIKVRAWTSKGSGPLSPSIQSRTMPVEQVFAKNFRVAAAMKTSVLLSWEVPDSYKSAVPFKILYNGQSVEVDGHSMRKLIADLQPNTEYSFVLMNRGSSAGGLQHLVSIRTAPDLLPHKPLPASAYIEDGRFDLSMPHVQDPSLVRWFYIVVVPIDRVGGSMLTPRWSTPEELELDELLEAIEQGGEEQRRRRRQAERLKPYVAAQLDVLPETFTLGDKKNYRGFYNRPLSPDLSYQCFVLASLKEPMDQKRYASSPYSDEIVVQVTPAQQQEEPEMLWVTGPVLAVILIILIVIAILLFKRKRTHSPSSKDEQSIGLKDSLLAHSSDPVEMRRLNYQTPGMRDHPPIPITDLADNIERLKANDGLKFSQEYESIDPGQQFTWENSNLEVNKPKNRYANVIAYDHSRVILTSIDGVPGSDYINANYIDGYRKQNAYIATQGPLPETMGDFWRMVWEQRTATVVMMTRLEEKSRVKCDQYWPARGTETCGLIQVTLLDTVELATYTVRTFALHKSGSSEKRELRQFQFMAWPDHGVPEYPTPILAFLRRVKACNPLDAGPMVVHCSAGVGRTGCFIVIDAMLERMKHEKTVDIYGHVTCMRSQRNYMVQTEDQYVFIHEALLEAATCGHTEVPARNLYAHIQKLGQVPPGESVTAMELEFKLLASSKAHTSRFISANLPCNKFKNRLVNIMPYELTRVCLQPIRGVEGSDYINASFLDGYRQQKAYIATQGPLAESTEDFWRMLWEHNSTIIVMLTKLREMGREKCHQYWPAERSARYQYFVVDPMAEYNMPQYILREFKVTDARDGQSRTIRQFQFTDWPEQGVPKTGEGFIDFIGQVHKTKEQFGQDGPITVHCSAGVGRTGVFITLSIVLERMRYEGVVDMFQTVKTLRTQRPAMVQTEDQYQLCYRAALEYLGSFDHYAT</sequence>
<protein>
    <recommendedName>
        <fullName>Receptor-type tyrosine-protein phosphatase F</fullName>
        <ecNumber>3.1.3.48</ecNumber>
    </recommendedName>
    <alternativeName>
        <fullName>Leukocyte common antigen related</fullName>
        <shortName>LAR</shortName>
    </alternativeName>
</protein>
<evidence type="ECO:0000250" key="1"/>
<evidence type="ECO:0000255" key="2"/>
<evidence type="ECO:0000255" key="3">
    <source>
        <dbReference type="PROSITE-ProRule" id="PRU00114"/>
    </source>
</evidence>
<evidence type="ECO:0000255" key="4">
    <source>
        <dbReference type="PROSITE-ProRule" id="PRU00160"/>
    </source>
</evidence>
<evidence type="ECO:0000255" key="5">
    <source>
        <dbReference type="PROSITE-ProRule" id="PRU00316"/>
    </source>
</evidence>
<evidence type="ECO:0000255" key="6">
    <source>
        <dbReference type="PROSITE-ProRule" id="PRU10044"/>
    </source>
</evidence>
<evidence type="ECO:0000256" key="7">
    <source>
        <dbReference type="SAM" id="MobiDB-lite"/>
    </source>
</evidence>
<evidence type="ECO:0000269" key="8">
    <source>
    </source>
</evidence>
<evidence type="ECO:0000269" key="9">
    <source>
    </source>
</evidence>
<evidence type="ECO:0000269" key="10">
    <source>
    </source>
</evidence>
<evidence type="ECO:0000269" key="11">
    <source>
    </source>
</evidence>
<evidence type="ECO:0000269" key="12">
    <source>
    </source>
</evidence>
<evidence type="ECO:0000269" key="13">
    <source>
    </source>
</evidence>
<evidence type="ECO:0000303" key="14">
    <source>
    </source>
</evidence>
<evidence type="ECO:0000303" key="15">
    <source>
    </source>
</evidence>
<evidence type="ECO:0000305" key="16"/>
<evidence type="ECO:0007744" key="17">
    <source>
    </source>
</evidence>
<evidence type="ECO:0007829" key="18">
    <source>
        <dbReference type="PDB" id="1LAR"/>
    </source>
</evidence>
<evidence type="ECO:0007829" key="19">
    <source>
        <dbReference type="PDB" id="2DN7"/>
    </source>
</evidence>
<evidence type="ECO:0007829" key="20">
    <source>
        <dbReference type="PDB" id="2EDY"/>
    </source>
</evidence>
<evidence type="ECO:0007829" key="21">
    <source>
        <dbReference type="PDB" id="2YD8"/>
    </source>
</evidence>
<evidence type="ECO:0007829" key="22">
    <source>
        <dbReference type="PDB" id="4N5U"/>
    </source>
</evidence>
<evidence type="ECO:0007829" key="23">
    <source>
        <dbReference type="PDB" id="6KR4"/>
    </source>
</evidence>
<evidence type="ECO:0007829" key="24">
    <source>
        <dbReference type="PDB" id="6TPU"/>
    </source>
</evidence>
<evidence type="ECO:0007829" key="25">
    <source>
        <dbReference type="PDB" id="6TPV"/>
    </source>
</evidence>
<evidence type="ECO:0007829" key="26">
    <source>
        <dbReference type="PDB" id="6TPW"/>
    </source>
</evidence>
<proteinExistence type="evidence at protein level"/>